<feature type="chain" id="PRO_0000092362" description="Fe(3+) ions import ATP-binding protein FbpC 1">
    <location>
        <begin position="1"/>
        <end position="353"/>
    </location>
</feature>
<feature type="domain" description="ABC transporter" evidence="1">
    <location>
        <begin position="9"/>
        <end position="239"/>
    </location>
</feature>
<feature type="binding site" evidence="1">
    <location>
        <begin position="41"/>
        <end position="48"/>
    </location>
    <ligand>
        <name>ATP</name>
        <dbReference type="ChEBI" id="CHEBI:30616"/>
    </ligand>
</feature>
<keyword id="KW-0067">ATP-binding</keyword>
<keyword id="KW-0997">Cell inner membrane</keyword>
<keyword id="KW-1003">Cell membrane</keyword>
<keyword id="KW-0406">Ion transport</keyword>
<keyword id="KW-0408">Iron</keyword>
<keyword id="KW-0410">Iron transport</keyword>
<keyword id="KW-0472">Membrane</keyword>
<keyword id="KW-0547">Nucleotide-binding</keyword>
<keyword id="KW-0614">Plasmid</keyword>
<keyword id="KW-1185">Reference proteome</keyword>
<keyword id="KW-1278">Translocase</keyword>
<keyword id="KW-0813">Transport</keyword>
<comment type="function">
    <text evidence="1">Part of the ABC transporter complex FbpABC involved in Fe(3+) ions import. Responsible for energy coupling to the transport system.</text>
</comment>
<comment type="catalytic activity">
    <reaction evidence="1">
        <text>Fe(3+)(out) + ATP + H2O = Fe(3+)(in) + ADP + phosphate + H(+)</text>
        <dbReference type="Rhea" id="RHEA:12332"/>
        <dbReference type="ChEBI" id="CHEBI:15377"/>
        <dbReference type="ChEBI" id="CHEBI:15378"/>
        <dbReference type="ChEBI" id="CHEBI:29034"/>
        <dbReference type="ChEBI" id="CHEBI:30616"/>
        <dbReference type="ChEBI" id="CHEBI:43474"/>
        <dbReference type="ChEBI" id="CHEBI:456216"/>
        <dbReference type="EC" id="7.2.2.7"/>
    </reaction>
</comment>
<comment type="subunit">
    <text evidence="1">The complex is composed of two ATP-binding proteins (FbpC), two transmembrane proteins (FbpB) and a solute-binding protein (FbpA).</text>
</comment>
<comment type="subcellular location">
    <subcellularLocation>
        <location evidence="1">Cell inner membrane</location>
        <topology evidence="1">Peripheral membrane protein</topology>
    </subcellularLocation>
</comment>
<comment type="similarity">
    <text evidence="1">Belongs to the ABC transporter superfamily. Fe(3+) ion importer (TC 3.A.1.10) family.</text>
</comment>
<protein>
    <recommendedName>
        <fullName evidence="1">Fe(3+) ions import ATP-binding protein FbpC 1</fullName>
        <ecNumber evidence="1">7.2.2.7</ecNumber>
    </recommendedName>
</protein>
<reference key="1">
    <citation type="journal article" date="2001" name="Proc. Natl. Acad. Sci. U.S.A.">
        <title>The complete sequence of the 1,683-kb pSymB megaplasmid from the N2-fixing endosymbiont Sinorhizobium meliloti.</title>
        <authorList>
            <person name="Finan T.M."/>
            <person name="Weidner S."/>
            <person name="Wong K."/>
            <person name="Buhrmester J."/>
            <person name="Chain P."/>
            <person name="Vorhoelter F.J."/>
            <person name="Hernandez-Lucas I."/>
            <person name="Becker A."/>
            <person name="Cowie A."/>
            <person name="Gouzy J."/>
            <person name="Golding B."/>
            <person name="Puehler A."/>
        </authorList>
    </citation>
    <scope>NUCLEOTIDE SEQUENCE [LARGE SCALE GENOMIC DNA]</scope>
    <source>
        <strain>1021</strain>
    </source>
</reference>
<reference key="2">
    <citation type="journal article" date="2001" name="Science">
        <title>The composite genome of the legume symbiont Sinorhizobium meliloti.</title>
        <authorList>
            <person name="Galibert F."/>
            <person name="Finan T.M."/>
            <person name="Long S.R."/>
            <person name="Puehler A."/>
            <person name="Abola P."/>
            <person name="Ampe F."/>
            <person name="Barloy-Hubler F."/>
            <person name="Barnett M.J."/>
            <person name="Becker A."/>
            <person name="Boistard P."/>
            <person name="Bothe G."/>
            <person name="Boutry M."/>
            <person name="Bowser L."/>
            <person name="Buhrmester J."/>
            <person name="Cadieu E."/>
            <person name="Capela D."/>
            <person name="Chain P."/>
            <person name="Cowie A."/>
            <person name="Davis R.W."/>
            <person name="Dreano S."/>
            <person name="Federspiel N.A."/>
            <person name="Fisher R.F."/>
            <person name="Gloux S."/>
            <person name="Godrie T."/>
            <person name="Goffeau A."/>
            <person name="Golding B."/>
            <person name="Gouzy J."/>
            <person name="Gurjal M."/>
            <person name="Hernandez-Lucas I."/>
            <person name="Hong A."/>
            <person name="Huizar L."/>
            <person name="Hyman R.W."/>
            <person name="Jones T."/>
            <person name="Kahn D."/>
            <person name="Kahn M.L."/>
            <person name="Kalman S."/>
            <person name="Keating D.H."/>
            <person name="Kiss E."/>
            <person name="Komp C."/>
            <person name="Lelaure V."/>
            <person name="Masuy D."/>
            <person name="Palm C."/>
            <person name="Peck M.C."/>
            <person name="Pohl T.M."/>
            <person name="Portetelle D."/>
            <person name="Purnelle B."/>
            <person name="Ramsperger U."/>
            <person name="Surzycki R."/>
            <person name="Thebault P."/>
            <person name="Vandenbol M."/>
            <person name="Vorhoelter F.J."/>
            <person name="Weidner S."/>
            <person name="Wells D.H."/>
            <person name="Wong K."/>
            <person name="Yeh K.-C."/>
            <person name="Batut J."/>
        </authorList>
    </citation>
    <scope>NUCLEOTIDE SEQUENCE [LARGE SCALE GENOMIC DNA]</scope>
    <source>
        <strain>1021</strain>
    </source>
</reference>
<dbReference type="EC" id="7.2.2.7" evidence="1"/>
<dbReference type="EMBL" id="AL591985">
    <property type="protein sequence ID" value="CAC48749.1"/>
    <property type="molecule type" value="Genomic_DNA"/>
</dbReference>
<dbReference type="PIR" id="E95885">
    <property type="entry name" value="E95885"/>
</dbReference>
<dbReference type="RefSeq" id="NP_436889.1">
    <property type="nucleotide sequence ID" value="NC_003078.1"/>
</dbReference>
<dbReference type="RefSeq" id="WP_010975241.1">
    <property type="nucleotide sequence ID" value="NC_003078.1"/>
</dbReference>
<dbReference type="SMR" id="Q92WJ0"/>
<dbReference type="EnsemblBacteria" id="CAC48749">
    <property type="protein sequence ID" value="CAC48749"/>
    <property type="gene ID" value="SM_b20363"/>
</dbReference>
<dbReference type="KEGG" id="sme:SM_b20363"/>
<dbReference type="PATRIC" id="fig|266834.11.peg.5278"/>
<dbReference type="eggNOG" id="COG3842">
    <property type="taxonomic scope" value="Bacteria"/>
</dbReference>
<dbReference type="HOGENOM" id="CLU_000604_1_1_5"/>
<dbReference type="OrthoDB" id="9802264at2"/>
<dbReference type="Proteomes" id="UP000001976">
    <property type="component" value="Plasmid pSymB"/>
</dbReference>
<dbReference type="GO" id="GO:0043190">
    <property type="term" value="C:ATP-binding cassette (ABC) transporter complex"/>
    <property type="evidence" value="ECO:0007669"/>
    <property type="project" value="InterPro"/>
</dbReference>
<dbReference type="GO" id="GO:0015408">
    <property type="term" value="F:ABC-type ferric iron transporter activity"/>
    <property type="evidence" value="ECO:0007669"/>
    <property type="project" value="UniProtKB-EC"/>
</dbReference>
<dbReference type="GO" id="GO:0005524">
    <property type="term" value="F:ATP binding"/>
    <property type="evidence" value="ECO:0007669"/>
    <property type="project" value="UniProtKB-KW"/>
</dbReference>
<dbReference type="GO" id="GO:0016887">
    <property type="term" value="F:ATP hydrolysis activity"/>
    <property type="evidence" value="ECO:0007669"/>
    <property type="project" value="InterPro"/>
</dbReference>
<dbReference type="FunFam" id="3.40.50.300:FF:000425">
    <property type="entry name" value="Probable ABC transporter, ATP-binding subunit"/>
    <property type="match status" value="1"/>
</dbReference>
<dbReference type="Gene3D" id="2.40.50.100">
    <property type="match status" value="1"/>
</dbReference>
<dbReference type="Gene3D" id="3.40.50.300">
    <property type="entry name" value="P-loop containing nucleotide triphosphate hydrolases"/>
    <property type="match status" value="1"/>
</dbReference>
<dbReference type="InterPro" id="IPR003593">
    <property type="entry name" value="AAA+_ATPase"/>
</dbReference>
<dbReference type="InterPro" id="IPR050093">
    <property type="entry name" value="ABC_SmlMolc_Importer"/>
</dbReference>
<dbReference type="InterPro" id="IPR003439">
    <property type="entry name" value="ABC_transporter-like_ATP-bd"/>
</dbReference>
<dbReference type="InterPro" id="IPR017871">
    <property type="entry name" value="ABC_transporter-like_CS"/>
</dbReference>
<dbReference type="InterPro" id="IPR008995">
    <property type="entry name" value="Mo/tungstate-bd_C_term_dom"/>
</dbReference>
<dbReference type="InterPro" id="IPR027417">
    <property type="entry name" value="P-loop_NTPase"/>
</dbReference>
<dbReference type="InterPro" id="IPR013611">
    <property type="entry name" value="Transp-assoc_OB_typ2"/>
</dbReference>
<dbReference type="PANTHER" id="PTHR42781">
    <property type="entry name" value="SPERMIDINE/PUTRESCINE IMPORT ATP-BINDING PROTEIN POTA"/>
    <property type="match status" value="1"/>
</dbReference>
<dbReference type="PANTHER" id="PTHR42781:SF4">
    <property type="entry name" value="SPERMIDINE_PUTRESCINE IMPORT ATP-BINDING PROTEIN POTA"/>
    <property type="match status" value="1"/>
</dbReference>
<dbReference type="Pfam" id="PF00005">
    <property type="entry name" value="ABC_tran"/>
    <property type="match status" value="1"/>
</dbReference>
<dbReference type="Pfam" id="PF08402">
    <property type="entry name" value="TOBE_2"/>
    <property type="match status" value="1"/>
</dbReference>
<dbReference type="SMART" id="SM00382">
    <property type="entry name" value="AAA"/>
    <property type="match status" value="1"/>
</dbReference>
<dbReference type="SUPFAM" id="SSF50331">
    <property type="entry name" value="MOP-like"/>
    <property type="match status" value="1"/>
</dbReference>
<dbReference type="SUPFAM" id="SSF52540">
    <property type="entry name" value="P-loop containing nucleoside triphosphate hydrolases"/>
    <property type="match status" value="1"/>
</dbReference>
<dbReference type="PROSITE" id="PS00211">
    <property type="entry name" value="ABC_TRANSPORTER_1"/>
    <property type="match status" value="1"/>
</dbReference>
<dbReference type="PROSITE" id="PS50893">
    <property type="entry name" value="ABC_TRANSPORTER_2"/>
    <property type="match status" value="1"/>
</dbReference>
<dbReference type="PROSITE" id="PS51242">
    <property type="entry name" value="FBPC"/>
    <property type="match status" value="1"/>
</dbReference>
<evidence type="ECO:0000255" key="1">
    <source>
        <dbReference type="HAMAP-Rule" id="MF_01706"/>
    </source>
</evidence>
<geneLocation type="plasmid">
    <name>pSymB</name>
    <name>megaplasmid 2</name>
</geneLocation>
<accession>Q92WJ0</accession>
<sequence length="353" mass="37985">MTVVAPGSVVFRNICKQFGAFTAIPDLSLTIEPGTLVTLLGPSGCGKTTTLRMLAGLEHPTSGRILIGGKDVTMLPANERDVSMVFQSYALFPHMNALDNVAYGLESSGMRRKEARERAEEGLALVGLPGMGQRLPAELSGGQQQRVAVARALVLEPQVLLLDEPLSNLDARLRRRVRTEIRELQQRLGFTAVYVTHDQDEALAVSDRIIVMKDGNIAQEGPPRELYETPASAFIADFMGEANVVACDVIDVDGHEATIRVERLTHRVSGRGMRPGPAKLAVRPNAITLEPSAAGSFSGEITHTAYLGDHVEYEVKTAAGTLFVVDPAVERALAPQTNVAIAFKERGIALING</sequence>
<proteinExistence type="inferred from homology"/>
<name>FBPC1_RHIME</name>
<organism>
    <name type="scientific">Rhizobium meliloti (strain 1021)</name>
    <name type="common">Ensifer meliloti</name>
    <name type="synonym">Sinorhizobium meliloti</name>
    <dbReference type="NCBI Taxonomy" id="266834"/>
    <lineage>
        <taxon>Bacteria</taxon>
        <taxon>Pseudomonadati</taxon>
        <taxon>Pseudomonadota</taxon>
        <taxon>Alphaproteobacteria</taxon>
        <taxon>Hyphomicrobiales</taxon>
        <taxon>Rhizobiaceae</taxon>
        <taxon>Sinorhizobium/Ensifer group</taxon>
        <taxon>Sinorhizobium</taxon>
    </lineage>
</organism>
<gene>
    <name evidence="1" type="primary">fbpC1</name>
    <name type="ordered locus">RB0349</name>
    <name type="ORF">SMb20363</name>
</gene>